<name>UPPP4_BACHK</name>
<feature type="chain" id="PRO_0000151104" description="Undecaprenyl-diphosphatase 4">
    <location>
        <begin position="1"/>
        <end position="259"/>
    </location>
</feature>
<feature type="transmembrane region" description="Helical" evidence="1">
    <location>
        <begin position="1"/>
        <end position="21"/>
    </location>
</feature>
<feature type="transmembrane region" description="Helical" evidence="1">
    <location>
        <begin position="39"/>
        <end position="59"/>
    </location>
</feature>
<feature type="transmembrane region" description="Helical" evidence="1">
    <location>
        <begin position="71"/>
        <end position="91"/>
    </location>
</feature>
<feature type="transmembrane region" description="Helical" evidence="1">
    <location>
        <begin position="99"/>
        <end position="119"/>
    </location>
</feature>
<feature type="transmembrane region" description="Helical" evidence="1">
    <location>
        <begin position="133"/>
        <end position="153"/>
    </location>
</feature>
<feature type="transmembrane region" description="Helical" evidence="1">
    <location>
        <begin position="173"/>
        <end position="193"/>
    </location>
</feature>
<feature type="transmembrane region" description="Helical" evidence="1">
    <location>
        <begin position="208"/>
        <end position="228"/>
    </location>
</feature>
<feature type="transmembrane region" description="Helical" evidence="1">
    <location>
        <begin position="239"/>
        <end position="259"/>
    </location>
</feature>
<protein>
    <recommendedName>
        <fullName evidence="1">Undecaprenyl-diphosphatase 4</fullName>
        <ecNumber evidence="1">3.6.1.27</ecNumber>
    </recommendedName>
    <alternativeName>
        <fullName evidence="1">Bacitracin resistance protein 4</fullName>
    </alternativeName>
    <alternativeName>
        <fullName evidence="1">Undecaprenyl pyrophosphate phosphatase 4</fullName>
    </alternativeName>
</protein>
<reference key="1">
    <citation type="journal article" date="2006" name="J. Bacteriol.">
        <title>Pathogenomic sequence analysis of Bacillus cereus and Bacillus thuringiensis isolates closely related to Bacillus anthracis.</title>
        <authorList>
            <person name="Han C.S."/>
            <person name="Xie G."/>
            <person name="Challacombe J.F."/>
            <person name="Altherr M.R."/>
            <person name="Bhotika S.S."/>
            <person name="Bruce D."/>
            <person name="Campbell C.S."/>
            <person name="Campbell M.L."/>
            <person name="Chen J."/>
            <person name="Chertkov O."/>
            <person name="Cleland C."/>
            <person name="Dimitrijevic M."/>
            <person name="Doggett N.A."/>
            <person name="Fawcett J.J."/>
            <person name="Glavina T."/>
            <person name="Goodwin L.A."/>
            <person name="Hill K.K."/>
            <person name="Hitchcock P."/>
            <person name="Jackson P.J."/>
            <person name="Keim P."/>
            <person name="Kewalramani A.R."/>
            <person name="Longmire J."/>
            <person name="Lucas S."/>
            <person name="Malfatti S."/>
            <person name="McMurry K."/>
            <person name="Meincke L.J."/>
            <person name="Misra M."/>
            <person name="Moseman B.L."/>
            <person name="Mundt M."/>
            <person name="Munk A.C."/>
            <person name="Okinaka R.T."/>
            <person name="Parson-Quintana B."/>
            <person name="Reilly L.P."/>
            <person name="Richardson P."/>
            <person name="Robinson D.L."/>
            <person name="Rubin E."/>
            <person name="Saunders E."/>
            <person name="Tapia R."/>
            <person name="Tesmer J.G."/>
            <person name="Thayer N."/>
            <person name="Thompson L.S."/>
            <person name="Tice H."/>
            <person name="Ticknor L.O."/>
            <person name="Wills P.L."/>
            <person name="Brettin T.S."/>
            <person name="Gilna P."/>
        </authorList>
    </citation>
    <scope>NUCLEOTIDE SEQUENCE [LARGE SCALE GENOMIC DNA]</scope>
    <source>
        <strain>97-27</strain>
    </source>
</reference>
<organism>
    <name type="scientific">Bacillus thuringiensis subsp. konkukian (strain 97-27)</name>
    <dbReference type="NCBI Taxonomy" id="281309"/>
    <lineage>
        <taxon>Bacteria</taxon>
        <taxon>Bacillati</taxon>
        <taxon>Bacillota</taxon>
        <taxon>Bacilli</taxon>
        <taxon>Bacillales</taxon>
        <taxon>Bacillaceae</taxon>
        <taxon>Bacillus</taxon>
        <taxon>Bacillus cereus group</taxon>
    </lineage>
</organism>
<evidence type="ECO:0000255" key="1">
    <source>
        <dbReference type="HAMAP-Rule" id="MF_01006"/>
    </source>
</evidence>
<comment type="function">
    <text evidence="1">Catalyzes the dephosphorylation of undecaprenyl diphosphate (UPP). Confers resistance to bacitracin.</text>
</comment>
<comment type="catalytic activity">
    <reaction evidence="1">
        <text>di-trans,octa-cis-undecaprenyl diphosphate + H2O = di-trans,octa-cis-undecaprenyl phosphate + phosphate + H(+)</text>
        <dbReference type="Rhea" id="RHEA:28094"/>
        <dbReference type="ChEBI" id="CHEBI:15377"/>
        <dbReference type="ChEBI" id="CHEBI:15378"/>
        <dbReference type="ChEBI" id="CHEBI:43474"/>
        <dbReference type="ChEBI" id="CHEBI:58405"/>
        <dbReference type="ChEBI" id="CHEBI:60392"/>
        <dbReference type="EC" id="3.6.1.27"/>
    </reaction>
</comment>
<comment type="subcellular location">
    <subcellularLocation>
        <location evidence="1">Cell membrane</location>
        <topology evidence="1">Multi-pass membrane protein</topology>
    </subcellularLocation>
</comment>
<comment type="miscellaneous">
    <text>Bacitracin is thought to be involved in the inhibition of peptidoglycan synthesis by sequestering undecaprenyl diphosphate, thereby reducing the pool of lipid carrier available.</text>
</comment>
<comment type="similarity">
    <text evidence="1">Belongs to the UppP family.</text>
</comment>
<proteinExistence type="inferred from homology"/>
<gene>
    <name evidence="1" type="primary">uppP4</name>
    <name type="synonym">bacA</name>
    <name type="ordered locus">BT9727_2479</name>
</gene>
<dbReference type="EC" id="3.6.1.27" evidence="1"/>
<dbReference type="EMBL" id="AE017355">
    <property type="protein sequence ID" value="AAT60038.1"/>
    <property type="molecule type" value="Genomic_DNA"/>
</dbReference>
<dbReference type="RefSeq" id="WP_001104281.1">
    <property type="nucleotide sequence ID" value="NC_005957.1"/>
</dbReference>
<dbReference type="RefSeq" id="YP_036805.1">
    <property type="nucleotide sequence ID" value="NC_005957.1"/>
</dbReference>
<dbReference type="SMR" id="Q6HI21"/>
<dbReference type="KEGG" id="btk:BT9727_2479"/>
<dbReference type="PATRIC" id="fig|281309.8.peg.2626"/>
<dbReference type="HOGENOM" id="CLU_060296_1_0_9"/>
<dbReference type="Proteomes" id="UP000001301">
    <property type="component" value="Chromosome"/>
</dbReference>
<dbReference type="GO" id="GO:0005886">
    <property type="term" value="C:plasma membrane"/>
    <property type="evidence" value="ECO:0007669"/>
    <property type="project" value="UniProtKB-SubCell"/>
</dbReference>
<dbReference type="GO" id="GO:0050380">
    <property type="term" value="F:undecaprenyl-diphosphatase activity"/>
    <property type="evidence" value="ECO:0007669"/>
    <property type="project" value="UniProtKB-UniRule"/>
</dbReference>
<dbReference type="GO" id="GO:0071555">
    <property type="term" value="P:cell wall organization"/>
    <property type="evidence" value="ECO:0007669"/>
    <property type="project" value="UniProtKB-KW"/>
</dbReference>
<dbReference type="GO" id="GO:0009252">
    <property type="term" value="P:peptidoglycan biosynthetic process"/>
    <property type="evidence" value="ECO:0007669"/>
    <property type="project" value="UniProtKB-KW"/>
</dbReference>
<dbReference type="GO" id="GO:0008360">
    <property type="term" value="P:regulation of cell shape"/>
    <property type="evidence" value="ECO:0007669"/>
    <property type="project" value="UniProtKB-KW"/>
</dbReference>
<dbReference type="GO" id="GO:0046677">
    <property type="term" value="P:response to antibiotic"/>
    <property type="evidence" value="ECO:0007669"/>
    <property type="project" value="UniProtKB-UniRule"/>
</dbReference>
<dbReference type="HAMAP" id="MF_01006">
    <property type="entry name" value="Undec_diphosphatase"/>
    <property type="match status" value="1"/>
</dbReference>
<dbReference type="InterPro" id="IPR003824">
    <property type="entry name" value="UppP"/>
</dbReference>
<dbReference type="PANTHER" id="PTHR30622">
    <property type="entry name" value="UNDECAPRENYL-DIPHOSPHATASE"/>
    <property type="match status" value="1"/>
</dbReference>
<dbReference type="PANTHER" id="PTHR30622:SF4">
    <property type="entry name" value="UNDECAPRENYL-DIPHOSPHATASE"/>
    <property type="match status" value="1"/>
</dbReference>
<dbReference type="Pfam" id="PF02673">
    <property type="entry name" value="BacA"/>
    <property type="match status" value="1"/>
</dbReference>
<keyword id="KW-0046">Antibiotic resistance</keyword>
<keyword id="KW-1003">Cell membrane</keyword>
<keyword id="KW-0133">Cell shape</keyword>
<keyword id="KW-0961">Cell wall biogenesis/degradation</keyword>
<keyword id="KW-0378">Hydrolase</keyword>
<keyword id="KW-0472">Membrane</keyword>
<keyword id="KW-0573">Peptidoglycan synthesis</keyword>
<keyword id="KW-0812">Transmembrane</keyword>
<keyword id="KW-1133">Transmembrane helix</keyword>
<sequence length="259" mass="29058">MNWLEAFILGIIQGLTEFLPISSTGHLYLGRHLFQLDEAGLFLDTMLHIGTLLAVFIYYKKEFIYLIKNPFSKLMLLLIVGTIPAVVIGLLFKDFFEDISKTGITIGWEFLVTGFFLYVADKQKNGRKKMGDITYKDAFIIGSFQAAAIFPAISRSGMTIVAALWRKLDRETAAYFSFLLSTPAIVGAIILQFADVFQGKAESISSTSLIVGTLSAAFFGYIAVSWMIQYLKRHSLKVFAYYVWGLGILILTLQFTDVF</sequence>
<accession>Q6HI21</accession>